<accession>B4SY89</accession>
<keyword id="KW-0143">Chaperone</keyword>
<keyword id="KW-0963">Cytoplasm</keyword>
<protein>
    <recommendedName>
        <fullName evidence="1">Chaperone protein TorD</fullName>
    </recommendedName>
</protein>
<comment type="function">
    <text evidence="1">Involved in the biogenesis of TorA. Acts on TorA before the insertion of the molybdenum cofactor and, as a result, probably favors a conformation of the apoenzyme that is competent for acquiring the cofactor.</text>
</comment>
<comment type="subcellular location">
    <subcellularLocation>
        <location evidence="1">Cytoplasm</location>
    </subcellularLocation>
</comment>
<comment type="similarity">
    <text evidence="1">Belongs to the TorD/DmsD family. TorD subfamily.</text>
</comment>
<evidence type="ECO:0000255" key="1">
    <source>
        <dbReference type="HAMAP-Rule" id="MF_01150"/>
    </source>
</evidence>
<dbReference type="EMBL" id="CP001113">
    <property type="protein sequence ID" value="ACF65321.1"/>
    <property type="molecule type" value="Genomic_DNA"/>
</dbReference>
<dbReference type="RefSeq" id="WP_000595421.1">
    <property type="nucleotide sequence ID" value="NZ_CCMR01000001.1"/>
</dbReference>
<dbReference type="SMR" id="B4SY89"/>
<dbReference type="KEGG" id="see:SNSL254_A4104"/>
<dbReference type="HOGENOM" id="CLU_077650_4_0_6"/>
<dbReference type="Proteomes" id="UP000008824">
    <property type="component" value="Chromosome"/>
</dbReference>
<dbReference type="GO" id="GO:0005737">
    <property type="term" value="C:cytoplasm"/>
    <property type="evidence" value="ECO:0007669"/>
    <property type="project" value="UniProtKB-SubCell"/>
</dbReference>
<dbReference type="GO" id="GO:0051259">
    <property type="term" value="P:protein complex oligomerization"/>
    <property type="evidence" value="ECO:0007669"/>
    <property type="project" value="InterPro"/>
</dbReference>
<dbReference type="GO" id="GO:0006457">
    <property type="term" value="P:protein folding"/>
    <property type="evidence" value="ECO:0007669"/>
    <property type="project" value="UniProtKB-UniRule"/>
</dbReference>
<dbReference type="Gene3D" id="1.20.120.1820">
    <property type="match status" value="1"/>
</dbReference>
<dbReference type="Gene3D" id="1.20.1280.20">
    <property type="entry name" value="HscB, C-terminal domain"/>
    <property type="match status" value="1"/>
</dbReference>
<dbReference type="HAMAP" id="MF_01150">
    <property type="entry name" value="TorD"/>
    <property type="match status" value="1"/>
</dbReference>
<dbReference type="InterPro" id="IPR023069">
    <property type="entry name" value="Chaperone_TorD"/>
</dbReference>
<dbReference type="InterPro" id="IPR020945">
    <property type="entry name" value="DMSO/NO3_reduct_chaperone"/>
</dbReference>
<dbReference type="InterPro" id="IPR036386">
    <property type="entry name" value="HscB_C_sf"/>
</dbReference>
<dbReference type="InterPro" id="IPR036411">
    <property type="entry name" value="TorD-like_sf"/>
</dbReference>
<dbReference type="InterPro" id="IPR050289">
    <property type="entry name" value="TorD/DmsD_chaperones"/>
</dbReference>
<dbReference type="NCBIfam" id="NF003442">
    <property type="entry name" value="PRK04976.1"/>
    <property type="match status" value="1"/>
</dbReference>
<dbReference type="PANTHER" id="PTHR34227:SF11">
    <property type="entry name" value="CHAPERONE PROTEIN TORD"/>
    <property type="match status" value="1"/>
</dbReference>
<dbReference type="PANTHER" id="PTHR34227">
    <property type="entry name" value="CHAPERONE PROTEIN YCDY"/>
    <property type="match status" value="1"/>
</dbReference>
<dbReference type="Pfam" id="PF02613">
    <property type="entry name" value="Nitrate_red_del"/>
    <property type="match status" value="1"/>
</dbReference>
<dbReference type="SUPFAM" id="SSF89155">
    <property type="entry name" value="TorD-like"/>
    <property type="match status" value="1"/>
</dbReference>
<organism>
    <name type="scientific">Salmonella newport (strain SL254)</name>
    <dbReference type="NCBI Taxonomy" id="423368"/>
    <lineage>
        <taxon>Bacteria</taxon>
        <taxon>Pseudomonadati</taxon>
        <taxon>Pseudomonadota</taxon>
        <taxon>Gammaproteobacteria</taxon>
        <taxon>Enterobacterales</taxon>
        <taxon>Enterobacteriaceae</taxon>
        <taxon>Salmonella</taxon>
    </lineage>
</organism>
<name>TORD_SALNS</name>
<feature type="chain" id="PRO_1000137516" description="Chaperone protein TorD">
    <location>
        <begin position="1"/>
        <end position="210"/>
    </location>
</feature>
<reference key="1">
    <citation type="journal article" date="2011" name="J. Bacteriol.">
        <title>Comparative genomics of 28 Salmonella enterica isolates: evidence for CRISPR-mediated adaptive sublineage evolution.</title>
        <authorList>
            <person name="Fricke W.F."/>
            <person name="Mammel M.K."/>
            <person name="McDermott P.F."/>
            <person name="Tartera C."/>
            <person name="White D.G."/>
            <person name="Leclerc J.E."/>
            <person name="Ravel J."/>
            <person name="Cebula T.A."/>
        </authorList>
    </citation>
    <scope>NUCLEOTIDE SEQUENCE [LARGE SCALE GENOMIC DNA]</scope>
    <source>
        <strain>SL254</strain>
    </source>
</reference>
<sequence>MIKQPALAQEQYACVYAWLALLFFREVDDEGLIQLQSAEIADWLALLKRQPALAASVALLEQKIAALSLRQDAQLELAADFCGLFLMTDKKSALPYASQYPQQEPGMIKHLLLEAGMEVNDDFKEPTDHLAIYLELLSHLHFSLGESFQQRRMNKLRQKTLSSLLEWLPEFTNNCLKHDPYGFYAALSQLLLAIVRFDDGKEDLSIVAAE</sequence>
<proteinExistence type="inferred from homology"/>
<gene>
    <name evidence="1" type="primary">torD</name>
    <name type="ordered locus">SNSL254_A4104</name>
</gene>